<proteinExistence type="predicted"/>
<reference key="1">
    <citation type="journal article" date="1993" name="Mol. Microbiol.">
        <title>Molecular analysis of two ScrR repressors and of a ScrR-FruR hybrid repressor for sucrose and D-fructose specific regulons from enteric bacteria.</title>
        <authorList>
            <person name="Jahreis K."/>
            <person name="Lengeler J.W."/>
        </authorList>
    </citation>
    <scope>NUCLEOTIDE SEQUENCE [GENOMIC DNA]</scope>
    <source>
        <strain>1033-5P14 / KAY2026</strain>
    </source>
</reference>
<gene>
    <name type="primary">scrR</name>
</gene>
<organism>
    <name type="scientific">Klebsiella pneumoniae</name>
    <dbReference type="NCBI Taxonomy" id="573"/>
    <lineage>
        <taxon>Bacteria</taxon>
        <taxon>Pseudomonadati</taxon>
        <taxon>Pseudomonadota</taxon>
        <taxon>Gammaproteobacteria</taxon>
        <taxon>Enterobacterales</taxon>
        <taxon>Enterobacteriaceae</taxon>
        <taxon>Klebsiella/Raoultella group</taxon>
        <taxon>Klebsiella</taxon>
        <taxon>Klebsiella pneumoniae complex</taxon>
    </lineage>
</organism>
<name>SCRR_KLEPN</name>
<dbReference type="EMBL" id="X67751">
    <property type="protein sequence ID" value="CAA47977.1"/>
    <property type="molecule type" value="Genomic_DNA"/>
</dbReference>
<dbReference type="PIR" id="S35015">
    <property type="entry name" value="S35015"/>
</dbReference>
<dbReference type="RefSeq" id="WP_004177008.1">
    <property type="nucleotide sequence ID" value="NZ_VOIV01000080.1"/>
</dbReference>
<dbReference type="SMR" id="P37076"/>
<dbReference type="GO" id="GO:0003700">
    <property type="term" value="F:DNA-binding transcription factor activity"/>
    <property type="evidence" value="ECO:0007669"/>
    <property type="project" value="TreeGrafter"/>
</dbReference>
<dbReference type="GO" id="GO:0000976">
    <property type="term" value="F:transcription cis-regulatory region binding"/>
    <property type="evidence" value="ECO:0007669"/>
    <property type="project" value="TreeGrafter"/>
</dbReference>
<dbReference type="GO" id="GO:0009750">
    <property type="term" value="P:response to fructose"/>
    <property type="evidence" value="ECO:0007669"/>
    <property type="project" value="InterPro"/>
</dbReference>
<dbReference type="CDD" id="cd01392">
    <property type="entry name" value="HTH_LacI"/>
    <property type="match status" value="1"/>
</dbReference>
<dbReference type="CDD" id="cd06274">
    <property type="entry name" value="PBP1_FruR"/>
    <property type="match status" value="1"/>
</dbReference>
<dbReference type="Gene3D" id="3.40.50.2300">
    <property type="match status" value="2"/>
</dbReference>
<dbReference type="Gene3D" id="1.10.260.40">
    <property type="entry name" value="lambda repressor-like DNA-binding domains"/>
    <property type="match status" value="1"/>
</dbReference>
<dbReference type="InterPro" id="IPR012781">
    <property type="entry name" value="Fruct_sucro_rep"/>
</dbReference>
<dbReference type="InterPro" id="IPR000843">
    <property type="entry name" value="HTH_LacI"/>
</dbReference>
<dbReference type="InterPro" id="IPR010982">
    <property type="entry name" value="Lambda_DNA-bd_dom_sf"/>
</dbReference>
<dbReference type="InterPro" id="IPR028082">
    <property type="entry name" value="Peripla_BP_I"/>
</dbReference>
<dbReference type="InterPro" id="IPR025997">
    <property type="entry name" value="SBP_2_dom"/>
</dbReference>
<dbReference type="NCBIfam" id="TIGR02417">
    <property type="entry name" value="fruct_sucro_rep"/>
    <property type="match status" value="1"/>
</dbReference>
<dbReference type="PANTHER" id="PTHR30146:SF45">
    <property type="entry name" value="CATABOLITE REPRESSOR_ACTIVATOR"/>
    <property type="match status" value="1"/>
</dbReference>
<dbReference type="PANTHER" id="PTHR30146">
    <property type="entry name" value="LACI-RELATED TRANSCRIPTIONAL REPRESSOR"/>
    <property type="match status" value="1"/>
</dbReference>
<dbReference type="Pfam" id="PF00356">
    <property type="entry name" value="LacI"/>
    <property type="match status" value="1"/>
</dbReference>
<dbReference type="Pfam" id="PF13407">
    <property type="entry name" value="Peripla_BP_4"/>
    <property type="match status" value="1"/>
</dbReference>
<dbReference type="PRINTS" id="PR00036">
    <property type="entry name" value="HTHLACI"/>
</dbReference>
<dbReference type="SMART" id="SM00354">
    <property type="entry name" value="HTH_LACI"/>
    <property type="match status" value="1"/>
</dbReference>
<dbReference type="SUPFAM" id="SSF47413">
    <property type="entry name" value="lambda repressor-like DNA-binding domains"/>
    <property type="match status" value="1"/>
</dbReference>
<dbReference type="SUPFAM" id="SSF53822">
    <property type="entry name" value="Periplasmic binding protein-like I"/>
    <property type="match status" value="1"/>
</dbReference>
<dbReference type="PROSITE" id="PS00356">
    <property type="entry name" value="HTH_LACI_1"/>
    <property type="match status" value="1"/>
</dbReference>
<dbReference type="PROSITE" id="PS50932">
    <property type="entry name" value="HTH_LACI_2"/>
    <property type="match status" value="1"/>
</dbReference>
<keyword id="KW-0238">DNA-binding</keyword>
<keyword id="KW-0678">Repressor</keyword>
<keyword id="KW-0804">Transcription</keyword>
<keyword id="KW-0805">Transcription regulation</keyword>
<evidence type="ECO:0000255" key="1">
    <source>
        <dbReference type="PROSITE-ProRule" id="PRU00111"/>
    </source>
</evidence>
<comment type="function">
    <text>Repressor for the scr operon. Binds D-fructose as an inducer.</text>
</comment>
<sequence length="334" mass="37186">MKTKRVTIKDIAELAGVSKATASLVLNGRGKELRVAQETRERVLAIAREQHYQPSIHARSLRDNRSHTIGLVVPEITNYGFAVFSHELETLCREAGVQLLISCTDENPGQESVVVNNMIARQVDGLIVASCMHSDADYQKLSEQLPVVLFDRSPSDSALPLVMTDSVTPTAELISRIAPQHADEFWFLGGQPRLSPSRDRLAGFTQGLAQAGITLRPEWVINGNYHPSSGYEMFAALCARLGRPPKALFTAACGLLEGVLRYMSQHHLLDSNIHLASFDDHYLYDSLSLRIDTVQQDNRQLAWHCYDLLSQLIDGQAPEPLQRYLPATLQIRHP</sequence>
<feature type="chain" id="PRO_0000107999" description="Sucrose operon repressor">
    <location>
        <begin position="1"/>
        <end position="334"/>
    </location>
</feature>
<feature type="domain" description="HTH lacI-type" evidence="1">
    <location>
        <begin position="6"/>
        <end position="63"/>
    </location>
</feature>
<feature type="DNA-binding region" description="H-T-H motif" evidence="1">
    <location>
        <begin position="8"/>
        <end position="27"/>
    </location>
</feature>
<accession>P37076</accession>
<protein>
    <recommendedName>
        <fullName>Sucrose operon repressor</fullName>
    </recommendedName>
    <alternativeName>
        <fullName>Scr operon regulatory protein</fullName>
    </alternativeName>
</protein>